<feature type="chain" id="PRO_0000344021" description="Effector protein BopA">
    <location>
        <begin position="1"/>
        <end position="512"/>
    </location>
</feature>
<feature type="coiled-coil region" evidence="2">
    <location>
        <begin position="347"/>
        <end position="377"/>
    </location>
</feature>
<reference key="1">
    <citation type="journal article" date="2010" name="Genome Biol. Evol.">
        <title>Continuing evolution of Burkholderia mallei through genome reduction and large-scale rearrangements.</title>
        <authorList>
            <person name="Losada L."/>
            <person name="Ronning C.M."/>
            <person name="DeShazer D."/>
            <person name="Woods D."/>
            <person name="Fedorova N."/>
            <person name="Kim H.S."/>
            <person name="Shabalina S.A."/>
            <person name="Pearson T.R."/>
            <person name="Brinkac L."/>
            <person name="Tan P."/>
            <person name="Nandi T."/>
            <person name="Crabtree J."/>
            <person name="Badger J."/>
            <person name="Beckstrom-Sternberg S."/>
            <person name="Saqib M."/>
            <person name="Schutzer S.E."/>
            <person name="Keim P."/>
            <person name="Nierman W.C."/>
        </authorList>
    </citation>
    <scope>NUCLEOTIDE SEQUENCE [LARGE SCALE GENOMIC DNA]</scope>
    <source>
        <strain>NCTC 10247</strain>
    </source>
</reference>
<accession>A3MCH8</accession>
<name>BOPA_BURM7</name>
<gene>
    <name type="primary">bopA</name>
    <name type="ordered locus">BMA10247_A0764</name>
</gene>
<evidence type="ECO:0000250" key="1"/>
<evidence type="ECO:0000255" key="2"/>
<evidence type="ECO:0000305" key="3"/>
<proteinExistence type="inferred from homology"/>
<keyword id="KW-0175">Coiled coil</keyword>
<keyword id="KW-0964">Secreted</keyword>
<keyword id="KW-0843">Virulence</keyword>
<comment type="function">
    <text evidence="1">Plays a role in mediating bacterial evasion from the host autophagic pathway.</text>
</comment>
<comment type="subcellular location">
    <subcellularLocation>
        <location evidence="1">Secreted</location>
    </subcellularLocation>
    <text evidence="1">Secreted via the bsa type III secretion system.</text>
</comment>
<comment type="similarity">
    <text evidence="3">Belongs to the BopA/IcsB family.</text>
</comment>
<sequence length="512" mass="56800">MINVGAFVASARSGARVVVGGDARGPVVSAARLGMKERLFAFLAHVPLLKHCDAVRRYAEQVRMENRRSLEVFVLALSKRYGPEGAKAAFDYGARRDGAPLDQRRVRNMVSIAEHFHGTGDAKPLARQMVFRSWECRGLDHPGHASLTIKNQADADAGRHVYEHVSWWPNQRLGSKEHFDRIEPKTLDGYRIDKRSEISSATEQRLREGDAARRKILADGFKYANQDERHDALFFPRAGQKLDKDAEWGLSARKVYFPAIGFNHDRRDTDRPRAFVLFGLNEAAMLRDARTVKEGAKSGELKYRMISKKENCASMALRVLRAGGAEHFVPYTAAWISEDPNHAHAYALAVQARIDALNQRRADVERRCERLRDSASVRQAWRAFSEAGGASASPLAEDAGRGRASAHMRQARLDEHAREVERIGAYFAELSAGRSGKHRDRADADLADAMKRCAPSARDDVAALTRKASVLVETLGRHLDAPPPSDSSALRRLAAHAMIGRIEAFMAAAIAA</sequence>
<organism>
    <name type="scientific">Burkholderia mallei (strain NCTC 10247)</name>
    <dbReference type="NCBI Taxonomy" id="320389"/>
    <lineage>
        <taxon>Bacteria</taxon>
        <taxon>Pseudomonadati</taxon>
        <taxon>Pseudomonadota</taxon>
        <taxon>Betaproteobacteria</taxon>
        <taxon>Burkholderiales</taxon>
        <taxon>Burkholderiaceae</taxon>
        <taxon>Burkholderia</taxon>
        <taxon>pseudomallei group</taxon>
    </lineage>
</organism>
<protein>
    <recommendedName>
        <fullName>Effector protein BopA</fullName>
    </recommendedName>
</protein>
<dbReference type="EMBL" id="CP000547">
    <property type="protein sequence ID" value="ABO02033.1"/>
    <property type="molecule type" value="Genomic_DNA"/>
</dbReference>
<dbReference type="RefSeq" id="WP_004187505.1">
    <property type="nucleotide sequence ID" value="NZ_CP007801.1"/>
</dbReference>
<dbReference type="SMR" id="A3MCH8"/>
<dbReference type="GeneID" id="92975838"/>
<dbReference type="KEGG" id="bmaz:BM44_4984"/>
<dbReference type="KEGG" id="bmn:BMA10247_A0764"/>
<dbReference type="PATRIC" id="fig|320389.8.peg.5719"/>
<dbReference type="GO" id="GO:0005615">
    <property type="term" value="C:extracellular space"/>
    <property type="evidence" value="ECO:0007669"/>
    <property type="project" value="InterPro"/>
</dbReference>
<dbReference type="Gene3D" id="4.10.1330.10">
    <property type="entry name" value="non globular Virulence effector SptP domain"/>
    <property type="match status" value="1"/>
</dbReference>
<dbReference type="InterPro" id="IPR011070">
    <property type="entry name" value="Globular_prot_asu/bsu"/>
</dbReference>
<dbReference type="InterPro" id="IPR015203">
    <property type="entry name" value="SptP_N"/>
</dbReference>
<dbReference type="InterPro" id="IPR044899">
    <property type="entry name" value="SptP_N_sf"/>
</dbReference>
<dbReference type="Pfam" id="PF09119">
    <property type="entry name" value="SicP-binding"/>
    <property type="match status" value="1"/>
</dbReference>
<dbReference type="SUPFAM" id="SSF56568">
    <property type="entry name" value="Non-globular alpha+beta subunits of globular proteins"/>
    <property type="match status" value="1"/>
</dbReference>